<protein>
    <recommendedName>
        <fullName evidence="1">Phenylalanine--tRNA ligase alpha subunit</fullName>
        <ecNumber evidence="1">6.1.1.20</ecNumber>
    </recommendedName>
    <alternativeName>
        <fullName evidence="1">Phenylalanyl-tRNA synthetase alpha subunit</fullName>
        <shortName evidence="1">PheRS</shortName>
    </alternativeName>
</protein>
<proteinExistence type="inferred from homology"/>
<sequence length="327" mass="37052">MPHLADLVVQAKADIERSQDIEALELVRVEYLGKKGHFTQQMTALRDLAPDARPAAGAVINQAKQDVQQALAERKATLEGAALEAWLAAETLDVSLPGRRMENGGLHPVSRTIARIEHFFGELGFSVATGPEIEDNYHNFDALNIPAHHPARADHDTFWFDATRLLRTQTSGVQIRTMKAQPPPIRIIAPGRVYRNDYDQTHTPMFHQMEGLIIDTDISFTNLKGTLHDFLRNFFEEDLQVRFRPSYFPFTEPSAEVDVMGKNGRWLEVLGCGMVHPNVLRNVGIDPEIYSGFAFGMGMERLTMLRYGVMDLRAFFENDLRFLKQFK</sequence>
<evidence type="ECO:0000255" key="1">
    <source>
        <dbReference type="HAMAP-Rule" id="MF_00281"/>
    </source>
</evidence>
<accession>Q2NT28</accession>
<feature type="chain" id="PRO_1000006903" description="Phenylalanine--tRNA ligase alpha subunit">
    <location>
        <begin position="1"/>
        <end position="327"/>
    </location>
</feature>
<feature type="binding site" evidence="1">
    <location>
        <position position="252"/>
    </location>
    <ligand>
        <name>Mg(2+)</name>
        <dbReference type="ChEBI" id="CHEBI:18420"/>
        <note>shared with beta subunit</note>
    </ligand>
</feature>
<dbReference type="EC" id="6.1.1.20" evidence="1"/>
<dbReference type="EMBL" id="AP008232">
    <property type="protein sequence ID" value="BAE74697.1"/>
    <property type="molecule type" value="Genomic_DNA"/>
</dbReference>
<dbReference type="RefSeq" id="WP_011411242.1">
    <property type="nucleotide sequence ID" value="NC_007712.1"/>
</dbReference>
<dbReference type="SMR" id="Q2NT28"/>
<dbReference type="STRING" id="343509.SG1422"/>
<dbReference type="KEGG" id="sgl:SG1422"/>
<dbReference type="eggNOG" id="COG0016">
    <property type="taxonomic scope" value="Bacteria"/>
</dbReference>
<dbReference type="HOGENOM" id="CLU_025086_0_1_6"/>
<dbReference type="OrthoDB" id="9800719at2"/>
<dbReference type="BioCyc" id="SGLO343509:SGP1_RS12610-MONOMER"/>
<dbReference type="Proteomes" id="UP000001932">
    <property type="component" value="Chromosome"/>
</dbReference>
<dbReference type="GO" id="GO:0005737">
    <property type="term" value="C:cytoplasm"/>
    <property type="evidence" value="ECO:0007669"/>
    <property type="project" value="UniProtKB-SubCell"/>
</dbReference>
<dbReference type="GO" id="GO:0005524">
    <property type="term" value="F:ATP binding"/>
    <property type="evidence" value="ECO:0007669"/>
    <property type="project" value="UniProtKB-UniRule"/>
</dbReference>
<dbReference type="GO" id="GO:0000287">
    <property type="term" value="F:magnesium ion binding"/>
    <property type="evidence" value="ECO:0007669"/>
    <property type="project" value="UniProtKB-UniRule"/>
</dbReference>
<dbReference type="GO" id="GO:0004826">
    <property type="term" value="F:phenylalanine-tRNA ligase activity"/>
    <property type="evidence" value="ECO:0007669"/>
    <property type="project" value="UniProtKB-UniRule"/>
</dbReference>
<dbReference type="GO" id="GO:0000049">
    <property type="term" value="F:tRNA binding"/>
    <property type="evidence" value="ECO:0007669"/>
    <property type="project" value="InterPro"/>
</dbReference>
<dbReference type="GO" id="GO:0006432">
    <property type="term" value="P:phenylalanyl-tRNA aminoacylation"/>
    <property type="evidence" value="ECO:0007669"/>
    <property type="project" value="UniProtKB-UniRule"/>
</dbReference>
<dbReference type="CDD" id="cd00496">
    <property type="entry name" value="PheRS_alpha_core"/>
    <property type="match status" value="1"/>
</dbReference>
<dbReference type="FunFam" id="3.30.930.10:FF:000003">
    <property type="entry name" value="Phenylalanine--tRNA ligase alpha subunit"/>
    <property type="match status" value="1"/>
</dbReference>
<dbReference type="Gene3D" id="3.30.930.10">
    <property type="entry name" value="Bira Bifunctional Protein, Domain 2"/>
    <property type="match status" value="1"/>
</dbReference>
<dbReference type="HAMAP" id="MF_00281">
    <property type="entry name" value="Phe_tRNA_synth_alpha1"/>
    <property type="match status" value="1"/>
</dbReference>
<dbReference type="InterPro" id="IPR006195">
    <property type="entry name" value="aa-tRNA-synth_II"/>
</dbReference>
<dbReference type="InterPro" id="IPR045864">
    <property type="entry name" value="aa-tRNA-synth_II/BPL/LPL"/>
</dbReference>
<dbReference type="InterPro" id="IPR004529">
    <property type="entry name" value="Phe-tRNA-synth_IIc_asu"/>
</dbReference>
<dbReference type="InterPro" id="IPR004188">
    <property type="entry name" value="Phe-tRNA_ligase_II_N"/>
</dbReference>
<dbReference type="InterPro" id="IPR022911">
    <property type="entry name" value="Phe_tRNA_ligase_alpha1_bac"/>
</dbReference>
<dbReference type="InterPro" id="IPR002319">
    <property type="entry name" value="Phenylalanyl-tRNA_Synthase"/>
</dbReference>
<dbReference type="InterPro" id="IPR010978">
    <property type="entry name" value="tRNA-bd_arm"/>
</dbReference>
<dbReference type="NCBIfam" id="TIGR00468">
    <property type="entry name" value="pheS"/>
    <property type="match status" value="1"/>
</dbReference>
<dbReference type="PANTHER" id="PTHR11538:SF41">
    <property type="entry name" value="PHENYLALANINE--TRNA LIGASE, MITOCHONDRIAL"/>
    <property type="match status" value="1"/>
</dbReference>
<dbReference type="PANTHER" id="PTHR11538">
    <property type="entry name" value="PHENYLALANYL-TRNA SYNTHETASE"/>
    <property type="match status" value="1"/>
</dbReference>
<dbReference type="Pfam" id="PF02912">
    <property type="entry name" value="Phe_tRNA-synt_N"/>
    <property type="match status" value="1"/>
</dbReference>
<dbReference type="Pfam" id="PF01409">
    <property type="entry name" value="tRNA-synt_2d"/>
    <property type="match status" value="1"/>
</dbReference>
<dbReference type="SUPFAM" id="SSF55681">
    <property type="entry name" value="Class II aaRS and biotin synthetases"/>
    <property type="match status" value="1"/>
</dbReference>
<dbReference type="SUPFAM" id="SSF46589">
    <property type="entry name" value="tRNA-binding arm"/>
    <property type="match status" value="1"/>
</dbReference>
<dbReference type="PROSITE" id="PS50862">
    <property type="entry name" value="AA_TRNA_LIGASE_II"/>
    <property type="match status" value="1"/>
</dbReference>
<name>SYFA_SODGM</name>
<reference key="1">
    <citation type="journal article" date="2006" name="Genome Res.">
        <title>Massive genome erosion and functional adaptations provide insights into the symbiotic lifestyle of Sodalis glossinidius in the tsetse host.</title>
        <authorList>
            <person name="Toh H."/>
            <person name="Weiss B.L."/>
            <person name="Perkin S.A.H."/>
            <person name="Yamashita A."/>
            <person name="Oshima K."/>
            <person name="Hattori M."/>
            <person name="Aksoy S."/>
        </authorList>
    </citation>
    <scope>NUCLEOTIDE SEQUENCE [LARGE SCALE GENOMIC DNA]</scope>
    <source>
        <strain>morsitans</strain>
    </source>
</reference>
<comment type="catalytic activity">
    <reaction evidence="1">
        <text>tRNA(Phe) + L-phenylalanine + ATP = L-phenylalanyl-tRNA(Phe) + AMP + diphosphate + H(+)</text>
        <dbReference type="Rhea" id="RHEA:19413"/>
        <dbReference type="Rhea" id="RHEA-COMP:9668"/>
        <dbReference type="Rhea" id="RHEA-COMP:9699"/>
        <dbReference type="ChEBI" id="CHEBI:15378"/>
        <dbReference type="ChEBI" id="CHEBI:30616"/>
        <dbReference type="ChEBI" id="CHEBI:33019"/>
        <dbReference type="ChEBI" id="CHEBI:58095"/>
        <dbReference type="ChEBI" id="CHEBI:78442"/>
        <dbReference type="ChEBI" id="CHEBI:78531"/>
        <dbReference type="ChEBI" id="CHEBI:456215"/>
        <dbReference type="EC" id="6.1.1.20"/>
    </reaction>
</comment>
<comment type="cofactor">
    <cofactor evidence="1">
        <name>Mg(2+)</name>
        <dbReference type="ChEBI" id="CHEBI:18420"/>
    </cofactor>
    <text evidence="1">Binds 2 magnesium ions per tetramer.</text>
</comment>
<comment type="subunit">
    <text evidence="1">Tetramer of two alpha and two beta subunits.</text>
</comment>
<comment type="subcellular location">
    <subcellularLocation>
        <location evidence="1">Cytoplasm</location>
    </subcellularLocation>
</comment>
<comment type="similarity">
    <text evidence="1">Belongs to the class-II aminoacyl-tRNA synthetase family. Phe-tRNA synthetase alpha subunit type 1 subfamily.</text>
</comment>
<keyword id="KW-0030">Aminoacyl-tRNA synthetase</keyword>
<keyword id="KW-0067">ATP-binding</keyword>
<keyword id="KW-0963">Cytoplasm</keyword>
<keyword id="KW-0436">Ligase</keyword>
<keyword id="KW-0460">Magnesium</keyword>
<keyword id="KW-0479">Metal-binding</keyword>
<keyword id="KW-0547">Nucleotide-binding</keyword>
<keyword id="KW-0648">Protein biosynthesis</keyword>
<gene>
    <name evidence="1" type="primary">pheS</name>
    <name type="ordered locus">SG1422</name>
</gene>
<organism>
    <name type="scientific">Sodalis glossinidius (strain morsitans)</name>
    <dbReference type="NCBI Taxonomy" id="343509"/>
    <lineage>
        <taxon>Bacteria</taxon>
        <taxon>Pseudomonadati</taxon>
        <taxon>Pseudomonadota</taxon>
        <taxon>Gammaproteobacteria</taxon>
        <taxon>Enterobacterales</taxon>
        <taxon>Bruguierivoracaceae</taxon>
        <taxon>Sodalis</taxon>
    </lineage>
</organism>